<evidence type="ECO:0000255" key="1">
    <source>
        <dbReference type="PROSITE-ProRule" id="PRU00248"/>
    </source>
</evidence>
<evidence type="ECO:0000255" key="2">
    <source>
        <dbReference type="PROSITE-ProRule" id="PRU00397"/>
    </source>
</evidence>
<evidence type="ECO:0000255" key="3">
    <source>
        <dbReference type="PROSITE-ProRule" id="PRU00723"/>
    </source>
</evidence>
<evidence type="ECO:0000256" key="4">
    <source>
        <dbReference type="SAM" id="MobiDB-lite"/>
    </source>
</evidence>
<evidence type="ECO:0000269" key="5">
    <source>
    </source>
</evidence>
<evidence type="ECO:0000269" key="6">
    <source>
    </source>
</evidence>
<evidence type="ECO:0000269" key="7">
    <source>
    </source>
</evidence>
<evidence type="ECO:0000269" key="8">
    <source>
    </source>
</evidence>
<evidence type="ECO:0000303" key="9">
    <source>
    </source>
</evidence>
<evidence type="ECO:0000303" key="10">
    <source>
    </source>
</evidence>
<evidence type="ECO:0000305" key="11"/>
<evidence type="ECO:0000312" key="12">
    <source>
        <dbReference type="HGNC" id="HGNC:23696"/>
    </source>
</evidence>
<comment type="function">
    <text evidence="6 7 8">ADP-ribosyltransferase that mediates mono-ADP-ribosylation of glutamate, aspartate and cysteine residues on target proteins (PubMed:23275542, PubMed:25043379, PubMed:30373764). Acts as a negative regulator of AHR by mediating mono-ADP-ribosylation of AHR, leading to inhibit transcription activator activity of AHR (PubMed:23275542, PubMed:30373764).</text>
</comment>
<comment type="catalytic activity">
    <reaction evidence="8">
        <text>L-aspartyl-[protein] + NAD(+) = 4-O-(ADP-D-ribosyl)-L-aspartyl-[protein] + nicotinamide</text>
        <dbReference type="Rhea" id="RHEA:54424"/>
        <dbReference type="Rhea" id="RHEA-COMP:9867"/>
        <dbReference type="Rhea" id="RHEA-COMP:13832"/>
        <dbReference type="ChEBI" id="CHEBI:17154"/>
        <dbReference type="ChEBI" id="CHEBI:29961"/>
        <dbReference type="ChEBI" id="CHEBI:57540"/>
        <dbReference type="ChEBI" id="CHEBI:138102"/>
    </reaction>
</comment>
<comment type="catalytic activity">
    <reaction evidence="8">
        <text>L-glutamyl-[protein] + NAD(+) = 5-O-(ADP-D-ribosyl)-L-glutamyl-[protein] + nicotinamide</text>
        <dbReference type="Rhea" id="RHEA:58224"/>
        <dbReference type="Rhea" id="RHEA-COMP:10208"/>
        <dbReference type="Rhea" id="RHEA-COMP:15089"/>
        <dbReference type="ChEBI" id="CHEBI:17154"/>
        <dbReference type="ChEBI" id="CHEBI:29973"/>
        <dbReference type="ChEBI" id="CHEBI:57540"/>
        <dbReference type="ChEBI" id="CHEBI:142540"/>
    </reaction>
</comment>
<comment type="catalytic activity">
    <reaction evidence="8">
        <text>L-cysteinyl-[protein] + NAD(+) = S-(ADP-D-ribosyl)-L-cysteinyl-[protein] + nicotinamide + H(+)</text>
        <dbReference type="Rhea" id="RHEA:56612"/>
        <dbReference type="Rhea" id="RHEA-COMP:10131"/>
        <dbReference type="Rhea" id="RHEA-COMP:14624"/>
        <dbReference type="ChEBI" id="CHEBI:15378"/>
        <dbReference type="ChEBI" id="CHEBI:17154"/>
        <dbReference type="ChEBI" id="CHEBI:29950"/>
        <dbReference type="ChEBI" id="CHEBI:57540"/>
        <dbReference type="ChEBI" id="CHEBI:140607"/>
    </reaction>
</comment>
<comment type="activity regulation">
    <text evidence="8">ADP-ribosyltransferase activity is inhibited by PJ34; inhibition is however not specific to TIPARP and other PARP-domain containing proteins are also inhibited by PJ34 (PubMed:30373764). Partially inhibited by KU0058948 (PubMed:30373764).</text>
</comment>
<comment type="subunit">
    <text evidence="6">Interacts with AHR.</text>
</comment>
<comment type="subcellular location">
    <subcellularLocation>
        <location evidence="6 8">Nucleus</location>
    </subcellularLocation>
</comment>
<comment type="PTM">
    <text evidence="8">Auto-mono-ADP-ribosylated.</text>
</comment>
<comment type="similarity">
    <text evidence="11">Belongs to the ARTD/PARP family.</text>
</comment>
<proteinExistence type="evidence at protein level"/>
<feature type="chain" id="PRO_0000247835" description="Protein mono-ADP-ribosyltransferase TIPARP">
    <location>
        <begin position="1"/>
        <end position="657"/>
    </location>
</feature>
<feature type="domain" description="WWE" evidence="1">
    <location>
        <begin position="332"/>
        <end position="410"/>
    </location>
</feature>
<feature type="domain" description="PARP catalytic" evidence="2">
    <location>
        <begin position="449"/>
        <end position="657"/>
    </location>
</feature>
<feature type="zinc finger region" description="C3H1-type" evidence="3">
    <location>
        <begin position="237"/>
        <end position="264"/>
    </location>
</feature>
<feature type="region of interest" description="Disordered" evidence="4">
    <location>
        <begin position="1"/>
        <end position="21"/>
    </location>
</feature>
<feature type="short sequence motif" description="Nuclear localization signal" evidence="8">
    <location>
        <begin position="41"/>
        <end position="47"/>
    </location>
</feature>
<feature type="compositionally biased region" description="Acidic residues" evidence="4">
    <location>
        <begin position="1"/>
        <end position="10"/>
    </location>
</feature>
<feature type="modified residue" description="ADP-ribosylcysteine" evidence="8">
    <location>
        <position position="39"/>
    </location>
</feature>
<feature type="sequence variant" id="VAR_027155" description="In dbSNP:rs17854621." evidence="5">
    <original>R</original>
    <variation>S</variation>
    <location>
        <position position="406"/>
    </location>
</feature>
<feature type="mutagenesis site" description="Slight reduction of auto-mono-ADP-ribosylation." evidence="6 8">
    <original>C</original>
    <variation>A</variation>
    <location>
        <position position="39"/>
    </location>
</feature>
<feature type="mutagenesis site" description="Partial relocalization to the cytoplasm." evidence="8">
    <original>K</original>
    <variation>A</variation>
    <location>
        <position position="41"/>
    </location>
</feature>
<feature type="mutagenesis site" description="Relocalization to the cytosol." evidence="6 8">
    <original>C</original>
    <variation>A</variation>
    <location>
        <position position="243"/>
    </location>
</feature>
<feature type="mutagenesis site" description="Abolishes ADP-ribosyltransferase activity." evidence="6 8">
    <original>H</original>
    <variation>A</variation>
    <location>
        <position position="532"/>
    </location>
</feature>
<feature type="mutagenesis site" description="Abolishes ADP-ribosyltransferase activity." evidence="6">
    <original>Y</original>
    <variation>A</variation>
    <location>
        <position position="564"/>
    </location>
</feature>
<feature type="mutagenesis site" description="Does not affect ADP-ribosyltransferase activity." evidence="6">
    <original>I</original>
    <variation>A</variation>
    <location>
        <position position="631"/>
    </location>
</feature>
<feature type="sequence conflict" description="In Ref. 1; CAH18441." evidence="11" ref="1">
    <original>K</original>
    <variation>E</variation>
    <location>
        <position position="43"/>
    </location>
</feature>
<feature type="sequence conflict" description="In Ref. 1; CAH18441." evidence="11" ref="1">
    <original>G</original>
    <variation>R</variation>
    <location>
        <position position="582"/>
    </location>
</feature>
<feature type="sequence conflict" description="In Ref. 1; CAH18441." evidence="11" ref="1">
    <original>V</original>
    <variation>A</variation>
    <location>
        <position position="633"/>
    </location>
</feature>
<dbReference type="EC" id="2.4.2.-" evidence="6 7 8"/>
<dbReference type="EMBL" id="AL080156">
    <property type="protein sequence ID" value="CAB45747.2"/>
    <property type="molecule type" value="mRNA"/>
</dbReference>
<dbReference type="EMBL" id="BX537965">
    <property type="protein sequence ID" value="CAD97929.1"/>
    <property type="molecule type" value="mRNA"/>
</dbReference>
<dbReference type="EMBL" id="CR749647">
    <property type="protein sequence ID" value="CAH18441.1"/>
    <property type="molecule type" value="mRNA"/>
</dbReference>
<dbReference type="EMBL" id="CH471052">
    <property type="protein sequence ID" value="EAW78725.1"/>
    <property type="molecule type" value="Genomic_DNA"/>
</dbReference>
<dbReference type="EMBL" id="CH471052">
    <property type="protein sequence ID" value="EAW78728.1"/>
    <property type="molecule type" value="Genomic_DNA"/>
</dbReference>
<dbReference type="EMBL" id="BC050350">
    <property type="protein sequence ID" value="AAH50350.2"/>
    <property type="molecule type" value="mRNA"/>
</dbReference>
<dbReference type="CCDS" id="CCDS3177.1"/>
<dbReference type="PIR" id="T12540">
    <property type="entry name" value="T12540"/>
</dbReference>
<dbReference type="RefSeq" id="NP_001171646.1">
    <property type="nucleotide sequence ID" value="NM_001184717.1"/>
</dbReference>
<dbReference type="RefSeq" id="NP_001171647.1">
    <property type="nucleotide sequence ID" value="NM_001184718.2"/>
</dbReference>
<dbReference type="RefSeq" id="NP_056323.2">
    <property type="nucleotide sequence ID" value="NM_015508.4"/>
</dbReference>
<dbReference type="RefSeq" id="XP_047303891.1">
    <property type="nucleotide sequence ID" value="XM_047447935.1"/>
</dbReference>
<dbReference type="RefSeq" id="XP_054202092.1">
    <property type="nucleotide sequence ID" value="XM_054346117.1"/>
</dbReference>
<dbReference type="SMR" id="Q7Z3E1"/>
<dbReference type="BioGRID" id="117460">
    <property type="interactions" value="1547"/>
</dbReference>
<dbReference type="FunCoup" id="Q7Z3E1">
    <property type="interactions" value="1551"/>
</dbReference>
<dbReference type="IntAct" id="Q7Z3E1">
    <property type="interactions" value="7"/>
</dbReference>
<dbReference type="MINT" id="Q7Z3E1"/>
<dbReference type="STRING" id="9606.ENSP00000420612"/>
<dbReference type="BindingDB" id="Q7Z3E1"/>
<dbReference type="ChEMBL" id="CHEMBL2380188"/>
<dbReference type="DrugBank" id="DB19028">
    <property type="generic name" value="Atamparib"/>
</dbReference>
<dbReference type="GuidetoPHARMACOLOGY" id="3266"/>
<dbReference type="GlyGen" id="Q7Z3E1">
    <property type="glycosylation" value="2 sites, 1 O-linked glycan (1 site)"/>
</dbReference>
<dbReference type="iPTMnet" id="Q7Z3E1"/>
<dbReference type="PhosphoSitePlus" id="Q7Z3E1"/>
<dbReference type="BioMuta" id="TIPARP"/>
<dbReference type="DMDM" id="74723283"/>
<dbReference type="MassIVE" id="Q7Z3E1"/>
<dbReference type="PaxDb" id="9606-ENSP00000420612"/>
<dbReference type="PeptideAtlas" id="Q7Z3E1"/>
<dbReference type="ProteomicsDB" id="69039"/>
<dbReference type="Antibodypedia" id="33637">
    <property type="antibodies" value="81 antibodies from 24 providers"/>
</dbReference>
<dbReference type="DNASU" id="25976"/>
<dbReference type="Ensembl" id="ENST00000295924.12">
    <property type="protein sequence ID" value="ENSP00000295924.7"/>
    <property type="gene ID" value="ENSG00000163659.13"/>
</dbReference>
<dbReference type="Ensembl" id="ENST00000461166.5">
    <property type="protein sequence ID" value="ENSP00000420612.1"/>
    <property type="gene ID" value="ENSG00000163659.13"/>
</dbReference>
<dbReference type="Ensembl" id="ENST00000486483.5">
    <property type="protein sequence ID" value="ENSP00000418757.1"/>
    <property type="gene ID" value="ENSG00000163659.13"/>
</dbReference>
<dbReference type="Ensembl" id="ENST00000542783.5">
    <property type="protein sequence ID" value="ENSP00000438345.1"/>
    <property type="gene ID" value="ENSG00000163659.13"/>
</dbReference>
<dbReference type="GeneID" id="25976"/>
<dbReference type="KEGG" id="hsa:25976"/>
<dbReference type="MANE-Select" id="ENST00000295924.12">
    <property type="protein sequence ID" value="ENSP00000295924.7"/>
    <property type="RefSeq nucleotide sequence ID" value="NM_015508.5"/>
    <property type="RefSeq protein sequence ID" value="NP_056323.2"/>
</dbReference>
<dbReference type="UCSC" id="uc003fav.4">
    <property type="organism name" value="human"/>
</dbReference>
<dbReference type="AGR" id="HGNC:23696"/>
<dbReference type="CTD" id="25976"/>
<dbReference type="DisGeNET" id="25976"/>
<dbReference type="GeneCards" id="TIPARP"/>
<dbReference type="HGNC" id="HGNC:23696">
    <property type="gene designation" value="TIPARP"/>
</dbReference>
<dbReference type="HPA" id="ENSG00000163659">
    <property type="expression patterns" value="Low tissue specificity"/>
</dbReference>
<dbReference type="MIM" id="612480">
    <property type="type" value="gene"/>
</dbReference>
<dbReference type="neXtProt" id="NX_Q7Z3E1"/>
<dbReference type="OpenTargets" id="ENSG00000163659"/>
<dbReference type="PharmGKB" id="PA134885396"/>
<dbReference type="VEuPathDB" id="HostDB:ENSG00000163659"/>
<dbReference type="eggNOG" id="ENOG502QQXA">
    <property type="taxonomic scope" value="Eukaryota"/>
</dbReference>
<dbReference type="GeneTree" id="ENSGT00940000155368"/>
<dbReference type="InParanoid" id="Q7Z3E1"/>
<dbReference type="OMA" id="IEEANCR"/>
<dbReference type="OrthoDB" id="6133115at2759"/>
<dbReference type="PAN-GO" id="Q7Z3E1">
    <property type="GO annotations" value="4 GO annotations based on evolutionary models"/>
</dbReference>
<dbReference type="PhylomeDB" id="Q7Z3E1"/>
<dbReference type="TreeFam" id="TF328965"/>
<dbReference type="BRENDA" id="2.4.2.30">
    <property type="organism ID" value="2681"/>
</dbReference>
<dbReference type="PathwayCommons" id="Q7Z3E1"/>
<dbReference type="SignaLink" id="Q7Z3E1"/>
<dbReference type="BioGRID-ORCS" id="25976">
    <property type="hits" value="195 hits in 1158 CRISPR screens"/>
</dbReference>
<dbReference type="CD-CODE" id="462A97B5">
    <property type="entry name" value="Leucocyte nuclear body"/>
</dbReference>
<dbReference type="ChiTaRS" id="TIPARP">
    <property type="organism name" value="human"/>
</dbReference>
<dbReference type="GeneWiki" id="TIPARP"/>
<dbReference type="GenomeRNAi" id="25976"/>
<dbReference type="Pharos" id="Q7Z3E1">
    <property type="development level" value="Tbio"/>
</dbReference>
<dbReference type="PRO" id="PR:Q7Z3E1"/>
<dbReference type="Proteomes" id="UP000005640">
    <property type="component" value="Chromosome 3"/>
</dbReference>
<dbReference type="RNAct" id="Q7Z3E1">
    <property type="molecule type" value="protein"/>
</dbReference>
<dbReference type="Bgee" id="ENSG00000163659">
    <property type="expression patterns" value="Expressed in secondary oocyte and 194 other cell types or tissues"/>
</dbReference>
<dbReference type="ExpressionAtlas" id="Q7Z3E1">
    <property type="expression patterns" value="baseline and differential"/>
</dbReference>
<dbReference type="GO" id="GO:0005634">
    <property type="term" value="C:nucleus"/>
    <property type="evidence" value="ECO:0000314"/>
    <property type="project" value="UniProtKB"/>
</dbReference>
<dbReference type="GO" id="GO:0000987">
    <property type="term" value="F:cis-regulatory region sequence-specific DNA binding"/>
    <property type="evidence" value="ECO:0000314"/>
    <property type="project" value="MGI"/>
</dbReference>
<dbReference type="GO" id="GO:0003950">
    <property type="term" value="F:NAD+ poly-ADP-ribosyltransferase activity"/>
    <property type="evidence" value="ECO:0000314"/>
    <property type="project" value="MGI"/>
</dbReference>
<dbReference type="GO" id="GO:1990404">
    <property type="term" value="F:NAD+-protein mono-ADP-ribosyltransferase activity"/>
    <property type="evidence" value="ECO:0000314"/>
    <property type="project" value="UniProtKB"/>
</dbReference>
<dbReference type="GO" id="GO:0140806">
    <property type="term" value="F:NAD+-protein-aspartate ADP-ribosyltransferase activity"/>
    <property type="evidence" value="ECO:0007669"/>
    <property type="project" value="RHEA"/>
</dbReference>
<dbReference type="GO" id="GO:0140803">
    <property type="term" value="F:NAD+-protein-cysteine ADP-ribosyltransferase activity"/>
    <property type="evidence" value="ECO:0000314"/>
    <property type="project" value="UniProtKB"/>
</dbReference>
<dbReference type="GO" id="GO:0140807">
    <property type="term" value="F:NAD+-protein-glutamate ADP-ribosyltransferase activity"/>
    <property type="evidence" value="ECO:0007669"/>
    <property type="project" value="RHEA"/>
</dbReference>
<dbReference type="GO" id="GO:0016779">
    <property type="term" value="F:nucleotidyltransferase activity"/>
    <property type="evidence" value="ECO:0007669"/>
    <property type="project" value="UniProtKB-KW"/>
</dbReference>
<dbReference type="GO" id="GO:0008270">
    <property type="term" value="F:zinc ion binding"/>
    <property type="evidence" value="ECO:0007669"/>
    <property type="project" value="UniProtKB-KW"/>
</dbReference>
<dbReference type="GO" id="GO:0008209">
    <property type="term" value="P:androgen metabolic process"/>
    <property type="evidence" value="ECO:0007669"/>
    <property type="project" value="Ensembl"/>
</dbReference>
<dbReference type="GO" id="GO:0008210">
    <property type="term" value="P:estrogen metabolic process"/>
    <property type="evidence" value="ECO:0007669"/>
    <property type="project" value="Ensembl"/>
</dbReference>
<dbReference type="GO" id="GO:0060325">
    <property type="term" value="P:face morphogenesis"/>
    <property type="evidence" value="ECO:0007669"/>
    <property type="project" value="Ensembl"/>
</dbReference>
<dbReference type="GO" id="GO:0008585">
    <property type="term" value="P:female gonad development"/>
    <property type="evidence" value="ECO:0007669"/>
    <property type="project" value="Ensembl"/>
</dbReference>
<dbReference type="GO" id="GO:0030097">
    <property type="term" value="P:hemopoiesis"/>
    <property type="evidence" value="ECO:0007669"/>
    <property type="project" value="Ensembl"/>
</dbReference>
<dbReference type="GO" id="GO:0001822">
    <property type="term" value="P:kidney development"/>
    <property type="evidence" value="ECO:0007669"/>
    <property type="project" value="Ensembl"/>
</dbReference>
<dbReference type="GO" id="GO:0010629">
    <property type="term" value="P:negative regulation of gene expression"/>
    <property type="evidence" value="ECO:0000315"/>
    <property type="project" value="MGI"/>
</dbReference>
<dbReference type="GO" id="GO:0048008">
    <property type="term" value="P:platelet-derived growth factor receptor signaling pathway"/>
    <property type="evidence" value="ECO:0007669"/>
    <property type="project" value="Ensembl"/>
</dbReference>
<dbReference type="GO" id="GO:0045732">
    <property type="term" value="P:positive regulation of protein catabolic process"/>
    <property type="evidence" value="ECO:0000315"/>
    <property type="project" value="MGI"/>
</dbReference>
<dbReference type="GO" id="GO:0009791">
    <property type="term" value="P:post-embryonic development"/>
    <property type="evidence" value="ECO:0007669"/>
    <property type="project" value="Ensembl"/>
</dbReference>
<dbReference type="GO" id="GO:1904612">
    <property type="term" value="P:response to 2,3,7,8-tetrachlorodibenzodioxine"/>
    <property type="evidence" value="ECO:0007669"/>
    <property type="project" value="Ensembl"/>
</dbReference>
<dbReference type="GO" id="GO:0060021">
    <property type="term" value="P:roof of mouth development"/>
    <property type="evidence" value="ECO:0007669"/>
    <property type="project" value="Ensembl"/>
</dbReference>
<dbReference type="GO" id="GO:0048705">
    <property type="term" value="P:skeletal system morphogenesis"/>
    <property type="evidence" value="ECO:0007669"/>
    <property type="project" value="Ensembl"/>
</dbReference>
<dbReference type="GO" id="GO:0048745">
    <property type="term" value="P:smooth muscle tissue development"/>
    <property type="evidence" value="ECO:0007669"/>
    <property type="project" value="Ensembl"/>
</dbReference>
<dbReference type="GO" id="GO:0001570">
    <property type="term" value="P:vasculogenesis"/>
    <property type="evidence" value="ECO:0007669"/>
    <property type="project" value="Ensembl"/>
</dbReference>
<dbReference type="CDD" id="cd01439">
    <property type="entry name" value="TCCD_inducible_PARP_like"/>
    <property type="match status" value="1"/>
</dbReference>
<dbReference type="FunFam" id="3.90.228.10:FF:000003">
    <property type="entry name" value="TCDD-inducible poly [ADP-ribose] polymerase"/>
    <property type="match status" value="1"/>
</dbReference>
<dbReference type="Gene3D" id="3.90.228.10">
    <property type="match status" value="1"/>
</dbReference>
<dbReference type="InterPro" id="IPR051712">
    <property type="entry name" value="ARTD-AVP"/>
</dbReference>
<dbReference type="InterPro" id="IPR012317">
    <property type="entry name" value="Poly(ADP-ribose)pol_cat_dom"/>
</dbReference>
<dbReference type="InterPro" id="IPR004170">
    <property type="entry name" value="WWE_dom"/>
</dbReference>
<dbReference type="InterPro" id="IPR037197">
    <property type="entry name" value="WWE_dom_sf"/>
</dbReference>
<dbReference type="InterPro" id="IPR000571">
    <property type="entry name" value="Znf_CCCH"/>
</dbReference>
<dbReference type="PANTHER" id="PTHR45740">
    <property type="entry name" value="POLY [ADP-RIBOSE] POLYMERASE"/>
    <property type="match status" value="1"/>
</dbReference>
<dbReference type="PANTHER" id="PTHR45740:SF7">
    <property type="entry name" value="PROTEIN MONO-ADP-RIBOSYLTRANSFERASE TIPARP"/>
    <property type="match status" value="1"/>
</dbReference>
<dbReference type="Pfam" id="PF00644">
    <property type="entry name" value="PARP"/>
    <property type="match status" value="1"/>
</dbReference>
<dbReference type="SUPFAM" id="SSF56399">
    <property type="entry name" value="ADP-ribosylation"/>
    <property type="match status" value="1"/>
</dbReference>
<dbReference type="SUPFAM" id="SSF117839">
    <property type="entry name" value="WWE domain"/>
    <property type="match status" value="1"/>
</dbReference>
<dbReference type="PROSITE" id="PS51059">
    <property type="entry name" value="PARP_CATALYTIC"/>
    <property type="match status" value="1"/>
</dbReference>
<dbReference type="PROSITE" id="PS50918">
    <property type="entry name" value="WWE"/>
    <property type="match status" value="1"/>
</dbReference>
<dbReference type="PROSITE" id="PS50103">
    <property type="entry name" value="ZF_C3H1"/>
    <property type="match status" value="1"/>
</dbReference>
<keyword id="KW-0013">ADP-ribosylation</keyword>
<keyword id="KW-0328">Glycosyltransferase</keyword>
<keyword id="KW-0479">Metal-binding</keyword>
<keyword id="KW-0520">NAD</keyword>
<keyword id="KW-0548">Nucleotidyltransferase</keyword>
<keyword id="KW-0539">Nucleus</keyword>
<keyword id="KW-1267">Proteomics identification</keyword>
<keyword id="KW-1185">Reference proteome</keyword>
<keyword id="KW-0808">Transferase</keyword>
<keyword id="KW-0862">Zinc</keyword>
<keyword id="KW-0863">Zinc-finger</keyword>
<protein>
    <recommendedName>
        <fullName evidence="11">Protein mono-ADP-ribosyltransferase TIPARP</fullName>
        <ecNumber evidence="6 7 8">2.4.2.-</ecNumber>
    </recommendedName>
    <alternativeName>
        <fullName evidence="10">ADP-ribosyltransferase diphtheria toxin-like 14</fullName>
        <shortName evidence="10">ARTD14</shortName>
    </alternativeName>
    <alternativeName>
        <fullName evidence="10">Poly [ADP-ribose] polymerase 7</fullName>
        <shortName evidence="10">PARP-7</shortName>
    </alternativeName>
    <alternativeName>
        <fullName evidence="9">TCDD-inducible poly [ADP-ribose] polymerase</fullName>
    </alternativeName>
</protein>
<organism>
    <name type="scientific">Homo sapiens</name>
    <name type="common">Human</name>
    <dbReference type="NCBI Taxonomy" id="9606"/>
    <lineage>
        <taxon>Eukaryota</taxon>
        <taxon>Metazoa</taxon>
        <taxon>Chordata</taxon>
        <taxon>Craniata</taxon>
        <taxon>Vertebrata</taxon>
        <taxon>Euteleostomi</taxon>
        <taxon>Mammalia</taxon>
        <taxon>Eutheria</taxon>
        <taxon>Euarchontoglires</taxon>
        <taxon>Primates</taxon>
        <taxon>Haplorrhini</taxon>
        <taxon>Catarrhini</taxon>
        <taxon>Hominidae</taxon>
        <taxon>Homo</taxon>
    </lineage>
</organism>
<gene>
    <name evidence="9 12" type="primary">TIPARP</name>
    <name evidence="10" type="synonym">PARP7</name>
</gene>
<reference key="1">
    <citation type="journal article" date="2007" name="BMC Genomics">
        <title>The full-ORF clone resource of the German cDNA consortium.</title>
        <authorList>
            <person name="Bechtel S."/>
            <person name="Rosenfelder H."/>
            <person name="Duda A."/>
            <person name="Schmidt C.P."/>
            <person name="Ernst U."/>
            <person name="Wellenreuther R."/>
            <person name="Mehrle A."/>
            <person name="Schuster C."/>
            <person name="Bahr A."/>
            <person name="Bloecker H."/>
            <person name="Heubner D."/>
            <person name="Hoerlein A."/>
            <person name="Michel G."/>
            <person name="Wedler H."/>
            <person name="Koehrer K."/>
            <person name="Ottenwaelder B."/>
            <person name="Poustka A."/>
            <person name="Wiemann S."/>
            <person name="Schupp I."/>
        </authorList>
    </citation>
    <scope>NUCLEOTIDE SEQUENCE [LARGE SCALE MRNA]</scope>
    <source>
        <tissue>Endometrial tumor</tissue>
        <tissue>Testis</tissue>
    </source>
</reference>
<reference key="2">
    <citation type="submission" date="2005-09" db="EMBL/GenBank/DDBJ databases">
        <authorList>
            <person name="Mural R.J."/>
            <person name="Istrail S."/>
            <person name="Sutton G.G."/>
            <person name="Florea L."/>
            <person name="Halpern A.L."/>
            <person name="Mobarry C.M."/>
            <person name="Lippert R."/>
            <person name="Walenz B."/>
            <person name="Shatkay H."/>
            <person name="Dew I."/>
            <person name="Miller J.R."/>
            <person name="Flanigan M.J."/>
            <person name="Edwards N.J."/>
            <person name="Bolanos R."/>
            <person name="Fasulo D."/>
            <person name="Halldorsson B.V."/>
            <person name="Hannenhalli S."/>
            <person name="Turner R."/>
            <person name="Yooseph S."/>
            <person name="Lu F."/>
            <person name="Nusskern D.R."/>
            <person name="Shue B.C."/>
            <person name="Zheng X.H."/>
            <person name="Zhong F."/>
            <person name="Delcher A.L."/>
            <person name="Huson D.H."/>
            <person name="Kravitz S.A."/>
            <person name="Mouchard L."/>
            <person name="Reinert K."/>
            <person name="Remington K.A."/>
            <person name="Clark A.G."/>
            <person name="Waterman M.S."/>
            <person name="Eichler E.E."/>
            <person name="Adams M.D."/>
            <person name="Hunkapiller M.W."/>
            <person name="Myers E.W."/>
            <person name="Venter J.C."/>
        </authorList>
    </citation>
    <scope>NUCLEOTIDE SEQUENCE [LARGE SCALE GENOMIC DNA]</scope>
</reference>
<reference key="3">
    <citation type="journal article" date="2004" name="Genome Res.">
        <title>The status, quality, and expansion of the NIH full-length cDNA project: the Mammalian Gene Collection (MGC).</title>
        <authorList>
            <consortium name="The MGC Project Team"/>
        </authorList>
    </citation>
    <scope>NUCLEOTIDE SEQUENCE [LARGE SCALE MRNA]</scope>
    <scope>VARIANT SER-406</scope>
    <source>
        <tissue>Brain</tissue>
    </source>
</reference>
<reference key="4">
    <citation type="journal article" date="2003" name="Int. J. Oncol.">
        <title>Identification and characterization of human TIPARP gene within the CCNL amplicon at human chromosome 3q25.31.</title>
        <authorList>
            <person name="Katoh M."/>
            <person name="Katoh M."/>
        </authorList>
    </citation>
    <scope>IDENTIFICATION</scope>
</reference>
<reference key="5">
    <citation type="journal article" date="2010" name="Trends Biochem. Sci.">
        <title>Toward a unified nomenclature for mammalian ADP-ribosyltransferases.</title>
        <authorList>
            <person name="Hottiger M.O."/>
            <person name="Hassa P.O."/>
            <person name="Luscher B."/>
            <person name="Schuler H."/>
            <person name="Koch-Nolte F."/>
        </authorList>
    </citation>
    <scope>NOMENCLATURE</scope>
</reference>
<reference key="6">
    <citation type="journal article" date="2013" name="Nucleic Acids Res.">
        <title>2,3,7,8-Tetrachlorodibenzo-p-dioxin poly(ADP-ribose) polymerase (TiPARP, ARTD14) is a mono-ADP-ribosyltransferase and repressor of aryl hydrocarbon receptor transactivation.</title>
        <authorList>
            <person name="MacPherson L."/>
            <person name="Tamblyn L."/>
            <person name="Rajendra S."/>
            <person name="Bralha F."/>
            <person name="McPherson J.P."/>
            <person name="Matthews J."/>
        </authorList>
    </citation>
    <scope>FUNCTION</scope>
    <scope>SUBCELLULAR LOCATION</scope>
    <scope>INTERACTION WITH AHR</scope>
    <scope>MUTAGENESIS OF CYS-243; HIS-532; TYR-564 AND ILE-631</scope>
</reference>
<reference key="7">
    <citation type="journal article" date="2014" name="Nat. Commun.">
        <title>Family-wide analysis of poly(ADP-ribose) polymerase activity.</title>
        <authorList>
            <person name="Vyas S."/>
            <person name="Matic I."/>
            <person name="Uchima L."/>
            <person name="Rood J."/>
            <person name="Zaja R."/>
            <person name="Hay R.T."/>
            <person name="Ahel I."/>
            <person name="Chang P."/>
        </authorList>
    </citation>
    <scope>FUNCTION</scope>
</reference>
<reference key="8">
    <citation type="journal article" date="2018" name="Biochem. J.">
        <title>Characterization of TCDD-Inducible Poly-ADP-Ribose Polymerase (TIPARP/ARTD14) Catalytic Activity.</title>
        <authorList>
            <person name="Gomez A."/>
            <person name="Bindesboell C."/>
            <person name="Somisetty V.S."/>
            <person name="Grimaldi G."/>
            <person name="Hutin D."/>
            <person name="MacPherson L."/>
            <person name="Ahmed S."/>
            <person name="Tamblyn L."/>
            <person name="Cho T."/>
            <person name="Nebb H.I."/>
            <person name="Moen A."/>
            <person name="Anonsen J.H."/>
            <person name="Grant D.M."/>
            <person name="Matthews J."/>
        </authorList>
    </citation>
    <scope>FUNCTION</scope>
    <scope>CATALYTIC ACTIVITY</scope>
    <scope>ACTIVITY REGULATION</scope>
    <scope>SUBCELLULAR LOCATION</scope>
    <scope>ADP-RIBOSYLATION AT CYS-39</scope>
    <scope>MUTAGENESIS OF CYS-39; LYS-41; CYS-243 AND HIS-532</scope>
</reference>
<name>PARPT_HUMAN</name>
<sequence>MEMETTEPEPDCVVQPPSPPDDFSCQMRLSEKITPLKTCFKKKDQKRLGTGTLRSLRPILNTLLESGSLDGVFRSRNQSTDENSLHEPMMKKAMEINSSCPPAENNMSVLIPDRTNVGDQIPEAHPSTEAPERVVPIQDHSFPSETLSGTVADSTPAHFQTDLLHPVSSDVPTSPDCLDKVIDYVPGIFQENSFTIQYILDTSDKLSTELFQDKSEEASLDLVFELVNQLQYHTHQENGIEICMDFLQGTCIYGRDCLKHHTVLPYHWQIKRTTTQKWQSVFNDSQEHLERFYCNPENDRMRMKYGGQEFWADLNAMNVYETTEFDQLRRLSTPPSSNVNSIYHTVWKFFCRDHFGWREYPESVIRLIEEANSRGLKEVRFMMWNNHYILHNSFFRREIKRRPLFRSCFILLPYLQTLGGVPTQAPPPLEATSSSQIICPDGVTSANFYPETWVYMHPSQDFIQVPVSAEDKSYRIIYNLFHKTVPEFKYRILQILRVQNQFLWEKYKRKKEYMNRKMFGRDRIINERHLFHGTSQDVVDGICKHNFDPRVCGKHATMFGQGSYFAKKASYSHNFSKKSSKGVHFMFLAKVLTGRYTMGSHGMRRPPPVNPGSVTSDLYDSCVDNFFEPQIFVIFNDDQSYPYFVIQYEEVSNTVSI</sequence>
<accession>Q7Z3E1</accession>
<accession>D3DNK6</accession>
<accession>Q68CY9</accession>
<accession>Q86VP4</accession>
<accession>Q9Y4P7</accession>